<feature type="chain" id="PRO_0000253298" description="Uncharacterized protein L910">
    <location>
        <begin position="1"/>
        <end position="210"/>
    </location>
</feature>
<organismHost>
    <name type="scientific">Acanthamoeba polyphaga</name>
    <name type="common">Amoeba</name>
    <dbReference type="NCBI Taxonomy" id="5757"/>
</organismHost>
<name>YL910_MIMIV</name>
<keyword id="KW-1185">Reference proteome</keyword>
<reference key="1">
    <citation type="journal article" date="2004" name="Science">
        <title>The 1.2-megabase genome sequence of Mimivirus.</title>
        <authorList>
            <person name="Raoult D."/>
            <person name="Audic S."/>
            <person name="Robert C."/>
            <person name="Abergel C."/>
            <person name="Renesto P."/>
            <person name="Ogata H."/>
            <person name="La Scola B."/>
            <person name="Susan M."/>
            <person name="Claverie J.-M."/>
        </authorList>
    </citation>
    <scope>NUCLEOTIDE SEQUENCE [LARGE SCALE GENOMIC DNA]</scope>
    <source>
        <strain>Rowbotham-Bradford</strain>
    </source>
</reference>
<sequence length="210" mass="25013">MSITSITSITNSVDNTNDLKFQDLPTEIYYLIIKHANLDSQNVMKLIKSDARFFFPILGDLFLEMRKSDSSKRLRQSVGAKPFIPQYLRDKKFENEDVDKFKYPIQIKTKISHLYEFNDFSIVRKPTHWEMKVRIPGKVIPSDLLDKFPGNLLNRNPEYSQITKSTKYTVNIIRSYYYTWTSNKKYKINYHEAICEVWEIRDFLHNHKIL</sequence>
<organism>
    <name type="scientific">Acanthamoeba polyphaga mimivirus</name>
    <name type="common">APMV</name>
    <dbReference type="NCBI Taxonomy" id="212035"/>
    <lineage>
        <taxon>Viruses</taxon>
        <taxon>Varidnaviria</taxon>
        <taxon>Bamfordvirae</taxon>
        <taxon>Nucleocytoviricota</taxon>
        <taxon>Megaviricetes</taxon>
        <taxon>Imitervirales</taxon>
        <taxon>Mimiviridae</taxon>
        <taxon>Megamimivirinae</taxon>
        <taxon>Mimivirus</taxon>
        <taxon>Mimivirus bradfordmassiliense</taxon>
    </lineage>
</organism>
<protein>
    <recommendedName>
        <fullName>Uncharacterized protein L910</fullName>
    </recommendedName>
</protein>
<gene>
    <name type="ordered locus">MIMI_L910</name>
</gene>
<proteinExistence type="predicted"/>
<dbReference type="EMBL" id="AY653733">
    <property type="protein sequence ID" value="AAV51167.1"/>
    <property type="molecule type" value="Genomic_DNA"/>
</dbReference>
<dbReference type="KEGG" id="vg:10021809"/>
<dbReference type="OrthoDB" id="38808at10239"/>
<dbReference type="Proteomes" id="UP000001134">
    <property type="component" value="Genome"/>
</dbReference>
<accession>Q5UR05</accession>